<protein>
    <recommendedName>
        <fullName evidence="6">Protein LITTLE ZIPPER 2</fullName>
    </recommendedName>
</protein>
<organism evidence="10">
    <name type="scientific">Arabidopsis thaliana</name>
    <name type="common">Mouse-ear cress</name>
    <dbReference type="NCBI Taxonomy" id="3702"/>
    <lineage>
        <taxon>Eukaryota</taxon>
        <taxon>Viridiplantae</taxon>
        <taxon>Streptophyta</taxon>
        <taxon>Embryophyta</taxon>
        <taxon>Tracheophyta</taxon>
        <taxon>Spermatophyta</taxon>
        <taxon>Magnoliopsida</taxon>
        <taxon>eudicotyledons</taxon>
        <taxon>Gunneridae</taxon>
        <taxon>Pentapetalae</taxon>
        <taxon>rosids</taxon>
        <taxon>malvids</taxon>
        <taxon>Brassicales</taxon>
        <taxon>Brassicaceae</taxon>
        <taxon>Camelineae</taxon>
        <taxon>Arabidopsis</taxon>
    </lineage>
</organism>
<feature type="chain" id="PRO_0000433474" description="Protein LITTLE ZIPPER 2">
    <location>
        <begin position="1"/>
        <end position="105"/>
    </location>
</feature>
<feature type="region of interest" description="Disordered" evidence="3">
    <location>
        <begin position="1"/>
        <end position="20"/>
    </location>
</feature>
<feature type="coiled-coil region" evidence="2">
    <location>
        <begin position="39"/>
        <end position="60"/>
    </location>
</feature>
<sequence>MCLTTSEPPFPDTDTPTMRSASYHIKHKSKTQTHLRILNLTRRRRLLKEQKEMEMRNLKLFVENQSIIRENEALKKKALLLHHENNALFALLHPKYSPVSTSLLQ</sequence>
<comment type="function">
    <text evidence="1">Competitive inhibitor of the HD-ZIPIII transcription factors in shoot apical meristem (SAM) development. Acts by forming non-functional heterodimers. Part of a negative feedback loop. Essential for proper functioning of stem cells in the SAM.</text>
</comment>
<comment type="subunit">
    <text evidence="4">Interacts with REV.</text>
</comment>
<comment type="alternative products">
    <event type="alternative splicing"/>
    <isoform>
        <id>Q9LZX5-1</id>
        <name>1</name>
        <sequence type="displayed"/>
    </isoform>
    <text evidence="7">A number of isoforms are produced. According to EST sequences.</text>
</comment>
<comment type="induction">
    <text evidence="4 5">Up-regulated in response to increased HD-ZIPIII activity (PubMed:18055602). Up-regulated by REV (PubMed:22781836).</text>
</comment>
<dbReference type="EMBL" id="AL162295">
    <property type="protein sequence ID" value="CAB82693.1"/>
    <property type="molecule type" value="Genomic_DNA"/>
</dbReference>
<dbReference type="EMBL" id="CP002686">
    <property type="protein sequence ID" value="AEE80122.1"/>
    <property type="molecule type" value="Genomic_DNA"/>
</dbReference>
<dbReference type="EMBL" id="CP002686">
    <property type="protein sequence ID" value="ANM65923.1"/>
    <property type="molecule type" value="Genomic_DNA"/>
</dbReference>
<dbReference type="PIR" id="T47900">
    <property type="entry name" value="T47900"/>
</dbReference>
<dbReference type="RefSeq" id="NP_001319809.1">
    <molecule id="Q9LZX5-1"/>
    <property type="nucleotide sequence ID" value="NM_001340061.1"/>
</dbReference>
<dbReference type="RefSeq" id="NP_191648.1">
    <molecule id="Q9LZX5-1"/>
    <property type="nucleotide sequence ID" value="NM_115953.3"/>
</dbReference>
<dbReference type="SMR" id="Q9LZX5"/>
<dbReference type="FunCoup" id="Q9LZX5">
    <property type="interactions" value="156"/>
</dbReference>
<dbReference type="STRING" id="3702.Q9LZX5"/>
<dbReference type="iPTMnet" id="Q9LZX5"/>
<dbReference type="PaxDb" id="3702-AT3G60890.2"/>
<dbReference type="EnsemblPlants" id="AT3G60890.1">
    <molecule id="Q9LZX5-1"/>
    <property type="protein sequence ID" value="AT3G60890.1"/>
    <property type="gene ID" value="AT3G60890"/>
</dbReference>
<dbReference type="EnsemblPlants" id="AT3G60890.3">
    <molecule id="Q9LZX5-1"/>
    <property type="protein sequence ID" value="AT3G60890.3"/>
    <property type="gene ID" value="AT3G60890"/>
</dbReference>
<dbReference type="GeneID" id="825260"/>
<dbReference type="Gramene" id="AT3G60890.1">
    <molecule id="Q9LZX5-1"/>
    <property type="protein sequence ID" value="AT3G60890.1"/>
    <property type="gene ID" value="AT3G60890"/>
</dbReference>
<dbReference type="Gramene" id="AT3G60890.3">
    <molecule id="Q9LZX5-1"/>
    <property type="protein sequence ID" value="AT3G60890.3"/>
    <property type="gene ID" value="AT3G60890"/>
</dbReference>
<dbReference type="KEGG" id="ath:AT3G60890"/>
<dbReference type="Araport" id="AT3G60890"/>
<dbReference type="TAIR" id="AT3G60890">
    <property type="gene designation" value="ZPR2"/>
</dbReference>
<dbReference type="InParanoid" id="Q9LZX5"/>
<dbReference type="OMA" id="SASCHNK"/>
<dbReference type="PhylomeDB" id="Q9LZX5"/>
<dbReference type="PRO" id="PR:Q9LZX5"/>
<dbReference type="Proteomes" id="UP000006548">
    <property type="component" value="Chromosome 3"/>
</dbReference>
<dbReference type="ExpressionAtlas" id="Q9LZX5">
    <property type="expression patterns" value="baseline and differential"/>
</dbReference>
<dbReference type="InterPro" id="IPR039312">
    <property type="entry name" value="ZPR"/>
</dbReference>
<dbReference type="PANTHER" id="PTHR33601:SF18">
    <property type="entry name" value="PROTEIN LITTLE ZIPPER 2"/>
    <property type="match status" value="1"/>
</dbReference>
<dbReference type="PANTHER" id="PTHR33601">
    <property type="entry name" value="PROTEIN LITTLE ZIPPER 4"/>
    <property type="match status" value="1"/>
</dbReference>
<gene>
    <name evidence="6" type="primary">ZPR2</name>
    <name evidence="8" type="ordered locus">At3g60890</name>
    <name evidence="9" type="ORF">T4C21.300</name>
</gene>
<evidence type="ECO:0000250" key="1">
    <source>
        <dbReference type="UniProtKB" id="Q9LXI8"/>
    </source>
</evidence>
<evidence type="ECO:0000255" key="2"/>
<evidence type="ECO:0000256" key="3">
    <source>
        <dbReference type="SAM" id="MobiDB-lite"/>
    </source>
</evidence>
<evidence type="ECO:0000269" key="4">
    <source>
    </source>
</evidence>
<evidence type="ECO:0000269" key="5">
    <source>
    </source>
</evidence>
<evidence type="ECO:0000303" key="6">
    <source>
    </source>
</evidence>
<evidence type="ECO:0000305" key="7"/>
<evidence type="ECO:0000312" key="8">
    <source>
        <dbReference type="Araport" id="AT3G60890"/>
    </source>
</evidence>
<evidence type="ECO:0000312" key="9">
    <source>
        <dbReference type="EMBL" id="CAB82693.1"/>
    </source>
</evidence>
<evidence type="ECO:0000312" key="10">
    <source>
        <dbReference type="Proteomes" id="UP000006548"/>
    </source>
</evidence>
<reference key="1">
    <citation type="journal article" date="2000" name="Nature">
        <title>Sequence and analysis of chromosome 3 of the plant Arabidopsis thaliana.</title>
        <authorList>
            <person name="Salanoubat M."/>
            <person name="Lemcke K."/>
            <person name="Rieger M."/>
            <person name="Ansorge W."/>
            <person name="Unseld M."/>
            <person name="Fartmann B."/>
            <person name="Valle G."/>
            <person name="Bloecker H."/>
            <person name="Perez-Alonso M."/>
            <person name="Obermaier B."/>
            <person name="Delseny M."/>
            <person name="Boutry M."/>
            <person name="Grivell L.A."/>
            <person name="Mache R."/>
            <person name="Puigdomenech P."/>
            <person name="De Simone V."/>
            <person name="Choisne N."/>
            <person name="Artiguenave F."/>
            <person name="Robert C."/>
            <person name="Brottier P."/>
            <person name="Wincker P."/>
            <person name="Cattolico L."/>
            <person name="Weissenbach J."/>
            <person name="Saurin W."/>
            <person name="Quetier F."/>
            <person name="Schaefer M."/>
            <person name="Mueller-Auer S."/>
            <person name="Gabel C."/>
            <person name="Fuchs M."/>
            <person name="Benes V."/>
            <person name="Wurmbach E."/>
            <person name="Drzonek H."/>
            <person name="Erfle H."/>
            <person name="Jordan N."/>
            <person name="Bangert S."/>
            <person name="Wiedelmann R."/>
            <person name="Kranz H."/>
            <person name="Voss H."/>
            <person name="Holland R."/>
            <person name="Brandt P."/>
            <person name="Nyakatura G."/>
            <person name="Vezzi A."/>
            <person name="D'Angelo M."/>
            <person name="Pallavicini A."/>
            <person name="Toppo S."/>
            <person name="Simionati B."/>
            <person name="Conrad A."/>
            <person name="Hornischer K."/>
            <person name="Kauer G."/>
            <person name="Loehnert T.-H."/>
            <person name="Nordsiek G."/>
            <person name="Reichelt J."/>
            <person name="Scharfe M."/>
            <person name="Schoen O."/>
            <person name="Bargues M."/>
            <person name="Terol J."/>
            <person name="Climent J."/>
            <person name="Navarro P."/>
            <person name="Collado C."/>
            <person name="Perez-Perez A."/>
            <person name="Ottenwaelder B."/>
            <person name="Duchemin D."/>
            <person name="Cooke R."/>
            <person name="Laudie M."/>
            <person name="Berger-Llauro C."/>
            <person name="Purnelle B."/>
            <person name="Masuy D."/>
            <person name="de Haan M."/>
            <person name="Maarse A.C."/>
            <person name="Alcaraz J.-P."/>
            <person name="Cottet A."/>
            <person name="Casacuberta E."/>
            <person name="Monfort A."/>
            <person name="Argiriou A."/>
            <person name="Flores M."/>
            <person name="Liguori R."/>
            <person name="Vitale D."/>
            <person name="Mannhaupt G."/>
            <person name="Haase D."/>
            <person name="Schoof H."/>
            <person name="Rudd S."/>
            <person name="Zaccaria P."/>
            <person name="Mewes H.-W."/>
            <person name="Mayer K.F.X."/>
            <person name="Kaul S."/>
            <person name="Town C.D."/>
            <person name="Koo H.L."/>
            <person name="Tallon L.J."/>
            <person name="Jenkins J."/>
            <person name="Rooney T."/>
            <person name="Rizzo M."/>
            <person name="Walts A."/>
            <person name="Utterback T."/>
            <person name="Fujii C.Y."/>
            <person name="Shea T.P."/>
            <person name="Creasy T.H."/>
            <person name="Haas B."/>
            <person name="Maiti R."/>
            <person name="Wu D."/>
            <person name="Peterson J."/>
            <person name="Van Aken S."/>
            <person name="Pai G."/>
            <person name="Militscher J."/>
            <person name="Sellers P."/>
            <person name="Gill J.E."/>
            <person name="Feldblyum T.V."/>
            <person name="Preuss D."/>
            <person name="Lin X."/>
            <person name="Nierman W.C."/>
            <person name="Salzberg S.L."/>
            <person name="White O."/>
            <person name="Venter J.C."/>
            <person name="Fraser C.M."/>
            <person name="Kaneko T."/>
            <person name="Nakamura Y."/>
            <person name="Sato S."/>
            <person name="Kato T."/>
            <person name="Asamizu E."/>
            <person name="Sasamoto S."/>
            <person name="Kimura T."/>
            <person name="Idesawa K."/>
            <person name="Kawashima K."/>
            <person name="Kishida Y."/>
            <person name="Kiyokawa C."/>
            <person name="Kohara M."/>
            <person name="Matsumoto M."/>
            <person name="Matsuno A."/>
            <person name="Muraki A."/>
            <person name="Nakayama S."/>
            <person name="Nakazaki N."/>
            <person name="Shinpo S."/>
            <person name="Takeuchi C."/>
            <person name="Wada T."/>
            <person name="Watanabe A."/>
            <person name="Yamada M."/>
            <person name="Yasuda M."/>
            <person name="Tabata S."/>
        </authorList>
    </citation>
    <scope>NUCLEOTIDE SEQUENCE [LARGE SCALE GENOMIC DNA]</scope>
    <source>
        <strain>cv. Columbia</strain>
    </source>
</reference>
<reference key="2">
    <citation type="journal article" date="2017" name="Plant J.">
        <title>Araport11: a complete reannotation of the Arabidopsis thaliana reference genome.</title>
        <authorList>
            <person name="Cheng C.Y."/>
            <person name="Krishnakumar V."/>
            <person name="Chan A.P."/>
            <person name="Thibaud-Nissen F."/>
            <person name="Schobel S."/>
            <person name="Town C.D."/>
        </authorList>
    </citation>
    <scope>GENOME REANNOTATION</scope>
    <source>
        <strain>cv. Columbia</strain>
    </source>
</reference>
<reference key="3">
    <citation type="journal article" date="2007" name="Plant Cell">
        <title>A feedback regulatory module formed by LITTLE ZIPPER and HD-ZIPIII genes.</title>
        <authorList>
            <person name="Wenkel S."/>
            <person name="Emery J."/>
            <person name="Hou B.H."/>
            <person name="Evans M.M."/>
            <person name="Barton M.K."/>
        </authorList>
    </citation>
    <scope>GENE FAMILY</scope>
    <scope>NOMENCLATURE</scope>
    <scope>INDUCTION</scope>
    <scope>INTERACTION WITH REV</scope>
</reference>
<reference key="4">
    <citation type="journal article" date="2011" name="EMBO Rep.">
        <title>Regulation of protein function by 'microProteins'.</title>
        <authorList>
            <person name="Staudt A.C."/>
            <person name="Wenkel S."/>
        </authorList>
    </citation>
    <scope>REVIEW</scope>
</reference>
<reference key="5">
    <citation type="journal article" date="2013" name="Mech. Dev.">
        <title>Control of stem cell homeostasis via interlocking microRNA and microProtein feedback loops.</title>
        <authorList>
            <person name="Brandt R."/>
            <person name="Xie Y."/>
            <person name="Musielak T."/>
            <person name="Graeff M."/>
            <person name="Stierhof Y.D."/>
            <person name="Huang H."/>
            <person name="Liu C.M."/>
            <person name="Wenkel S."/>
        </authorList>
    </citation>
    <scope>INDUCTION BY REV</scope>
</reference>
<reference key="6">
    <citation type="journal article" date="2014" name="Mol. Phylogenet. Evol.">
        <title>Origin of a novel regulatory module by duplication and degeneration of an ancient plant transcription factor.</title>
        <authorList>
            <person name="Floyd S.K."/>
            <person name="Ryan J.G."/>
            <person name="Conway S.J."/>
            <person name="Brenner E."/>
            <person name="Burris K.P."/>
            <person name="Burris J.N."/>
            <person name="Chen T."/>
            <person name="Edger P.P."/>
            <person name="Graham S.W."/>
            <person name="Leebens-Mack J.H."/>
            <person name="Pires J.C."/>
            <person name="Rothfels C.J."/>
            <person name="Sigel E.M."/>
            <person name="Stevenson D.W."/>
            <person name="Neal Stewart C. Jr."/>
            <person name="Wong G.K."/>
            <person name="Bowman J.L."/>
        </authorList>
    </citation>
    <scope>GENE FAMILY</scope>
</reference>
<name>ZPR2_ARATH</name>
<accession>Q9LZX5</accession>
<proteinExistence type="evidence at protein level"/>
<keyword id="KW-0025">Alternative splicing</keyword>
<keyword id="KW-0175">Coiled coil</keyword>
<keyword id="KW-1185">Reference proteome</keyword>
<keyword id="KW-0804">Transcription</keyword>
<keyword id="KW-0805">Transcription regulation</keyword>